<sequence length="177" mass="19932">MNKLILLPREFFARDTNLVSTELIGKVLYFQGKTAIITETESYIGQDDPACHAARGRTKRTDIMFGPAGFSYVYLIYGMYYCLNFVTETEGFPAATLIRGVHVISPENLYLNGPGKLCKYLGINISHNKCDLINNNEFFVSDIGLKLPYSTTTRIGITKGTDKLWRYVVTDIIRLPA</sequence>
<comment type="similarity">
    <text evidence="1">Belongs to the DNA glycosylase MPG family.</text>
</comment>
<keyword id="KW-0227">DNA damage</keyword>
<keyword id="KW-0234">DNA repair</keyword>
<keyword id="KW-0378">Hydrolase</keyword>
<evidence type="ECO:0000255" key="1">
    <source>
        <dbReference type="HAMAP-Rule" id="MF_00527"/>
    </source>
</evidence>
<protein>
    <recommendedName>
        <fullName evidence="1">Putative 3-methyladenine DNA glycosylase</fullName>
        <ecNumber evidence="1">3.2.2.-</ecNumber>
    </recommendedName>
</protein>
<proteinExistence type="inferred from homology"/>
<dbReference type="EC" id="3.2.2.-" evidence="1"/>
<dbReference type="EMBL" id="CP000053">
    <property type="protein sequence ID" value="AAY61411.1"/>
    <property type="molecule type" value="Genomic_DNA"/>
</dbReference>
<dbReference type="SMR" id="Q4UM12"/>
<dbReference type="STRING" id="315456.RF_0560"/>
<dbReference type="KEGG" id="rfe:RF_0560"/>
<dbReference type="eggNOG" id="COG2094">
    <property type="taxonomic scope" value="Bacteria"/>
</dbReference>
<dbReference type="HOGENOM" id="CLU_060471_4_1_5"/>
<dbReference type="OrthoDB" id="9794313at2"/>
<dbReference type="Proteomes" id="UP000008548">
    <property type="component" value="Chromosome"/>
</dbReference>
<dbReference type="GO" id="GO:0003905">
    <property type="term" value="F:alkylbase DNA N-glycosylase activity"/>
    <property type="evidence" value="ECO:0007669"/>
    <property type="project" value="InterPro"/>
</dbReference>
<dbReference type="GO" id="GO:0003677">
    <property type="term" value="F:DNA binding"/>
    <property type="evidence" value="ECO:0007669"/>
    <property type="project" value="InterPro"/>
</dbReference>
<dbReference type="GO" id="GO:0006284">
    <property type="term" value="P:base-excision repair"/>
    <property type="evidence" value="ECO:0007669"/>
    <property type="project" value="InterPro"/>
</dbReference>
<dbReference type="CDD" id="cd00540">
    <property type="entry name" value="AAG"/>
    <property type="match status" value="1"/>
</dbReference>
<dbReference type="Gene3D" id="3.10.300.10">
    <property type="entry name" value="Methylpurine-DNA glycosylase (MPG)"/>
    <property type="match status" value="2"/>
</dbReference>
<dbReference type="HAMAP" id="MF_00527">
    <property type="entry name" value="3MGH"/>
    <property type="match status" value="1"/>
</dbReference>
<dbReference type="InterPro" id="IPR011034">
    <property type="entry name" value="Formyl_transferase-like_C_sf"/>
</dbReference>
<dbReference type="InterPro" id="IPR003180">
    <property type="entry name" value="MPG"/>
</dbReference>
<dbReference type="InterPro" id="IPR036995">
    <property type="entry name" value="MPG_sf"/>
</dbReference>
<dbReference type="NCBIfam" id="TIGR00567">
    <property type="entry name" value="3mg"/>
    <property type="match status" value="1"/>
</dbReference>
<dbReference type="NCBIfam" id="NF002004">
    <property type="entry name" value="PRK00802.1-4"/>
    <property type="match status" value="1"/>
</dbReference>
<dbReference type="PANTHER" id="PTHR10429">
    <property type="entry name" value="DNA-3-METHYLADENINE GLYCOSYLASE"/>
    <property type="match status" value="1"/>
</dbReference>
<dbReference type="PANTHER" id="PTHR10429:SF0">
    <property type="entry name" value="DNA-3-METHYLADENINE GLYCOSYLASE"/>
    <property type="match status" value="1"/>
</dbReference>
<dbReference type="Pfam" id="PF02245">
    <property type="entry name" value="Pur_DNA_glyco"/>
    <property type="match status" value="1"/>
</dbReference>
<dbReference type="SUPFAM" id="SSF50486">
    <property type="entry name" value="FMT C-terminal domain-like"/>
    <property type="match status" value="1"/>
</dbReference>
<feature type="chain" id="PRO_0000265055" description="Putative 3-methyladenine DNA glycosylase">
    <location>
        <begin position="1"/>
        <end position="177"/>
    </location>
</feature>
<reference key="1">
    <citation type="journal article" date="2005" name="PLoS Biol.">
        <title>The genome sequence of Rickettsia felis identifies the first putative conjugative plasmid in an obligate intracellular parasite.</title>
        <authorList>
            <person name="Ogata H."/>
            <person name="Renesto P."/>
            <person name="Audic S."/>
            <person name="Robert C."/>
            <person name="Blanc G."/>
            <person name="Fournier P.-E."/>
            <person name="Parinello H."/>
            <person name="Claverie J.-M."/>
            <person name="Raoult D."/>
        </authorList>
    </citation>
    <scope>NUCLEOTIDE SEQUENCE [LARGE SCALE GENOMIC DNA]</scope>
    <source>
        <strain>ATCC VR-1525 / URRWXCal2</strain>
    </source>
</reference>
<accession>Q4UM12</accession>
<gene>
    <name type="ordered locus">RF_0560</name>
</gene>
<name>3MGH_RICFE</name>
<organism>
    <name type="scientific">Rickettsia felis (strain ATCC VR-1525 / URRWXCal2)</name>
    <name type="common">Rickettsia azadi</name>
    <dbReference type="NCBI Taxonomy" id="315456"/>
    <lineage>
        <taxon>Bacteria</taxon>
        <taxon>Pseudomonadati</taxon>
        <taxon>Pseudomonadota</taxon>
        <taxon>Alphaproteobacteria</taxon>
        <taxon>Rickettsiales</taxon>
        <taxon>Rickettsiaceae</taxon>
        <taxon>Rickettsieae</taxon>
        <taxon>Rickettsia</taxon>
        <taxon>spotted fever group</taxon>
    </lineage>
</organism>